<gene>
    <name evidence="1" type="primary">rplJ</name>
    <name type="ordered locus">SeD_A4557</name>
</gene>
<reference key="1">
    <citation type="journal article" date="2011" name="J. Bacteriol.">
        <title>Comparative genomics of 28 Salmonella enterica isolates: evidence for CRISPR-mediated adaptive sublineage evolution.</title>
        <authorList>
            <person name="Fricke W.F."/>
            <person name="Mammel M.K."/>
            <person name="McDermott P.F."/>
            <person name="Tartera C."/>
            <person name="White D.G."/>
            <person name="Leclerc J.E."/>
            <person name="Ravel J."/>
            <person name="Cebula T.A."/>
        </authorList>
    </citation>
    <scope>NUCLEOTIDE SEQUENCE [LARGE SCALE GENOMIC DNA]</scope>
    <source>
        <strain>CT_02021853</strain>
    </source>
</reference>
<proteinExistence type="inferred from homology"/>
<accession>B5FQJ7</accession>
<name>RL10_SALDC</name>
<organism>
    <name type="scientific">Salmonella dublin (strain CT_02021853)</name>
    <dbReference type="NCBI Taxonomy" id="439851"/>
    <lineage>
        <taxon>Bacteria</taxon>
        <taxon>Pseudomonadati</taxon>
        <taxon>Pseudomonadota</taxon>
        <taxon>Gammaproteobacteria</taxon>
        <taxon>Enterobacterales</taxon>
        <taxon>Enterobacteriaceae</taxon>
        <taxon>Salmonella</taxon>
    </lineage>
</organism>
<evidence type="ECO:0000255" key="1">
    <source>
        <dbReference type="HAMAP-Rule" id="MF_00362"/>
    </source>
</evidence>
<evidence type="ECO:0000305" key="2"/>
<sequence>MALNLQDKQAIVAEVSEVAKGALSAVVADSRGVTVDKMTELRKAGREAGVYMRVVRNTLLRRVVEGTQFECLKDTFVGPTLIAYSMEHPGAAARLFKEFAKANAKFEVKAAAFEGELIPASQIDRLATLPTYEEAIARLMATMKEASAGKLVRTLAAVRDAKEAA</sequence>
<keyword id="KW-0687">Ribonucleoprotein</keyword>
<keyword id="KW-0689">Ribosomal protein</keyword>
<keyword id="KW-0694">RNA-binding</keyword>
<keyword id="KW-0699">rRNA-binding</keyword>
<dbReference type="EMBL" id="CP001144">
    <property type="protein sequence ID" value="ACH77101.1"/>
    <property type="molecule type" value="Genomic_DNA"/>
</dbReference>
<dbReference type="RefSeq" id="WP_001207203.1">
    <property type="nucleotide sequence ID" value="NC_011205.1"/>
</dbReference>
<dbReference type="GeneID" id="93756505"/>
<dbReference type="KEGG" id="sed:SeD_A4557"/>
<dbReference type="HOGENOM" id="CLU_092227_0_2_6"/>
<dbReference type="Proteomes" id="UP000008322">
    <property type="component" value="Chromosome"/>
</dbReference>
<dbReference type="GO" id="GO:0015934">
    <property type="term" value="C:large ribosomal subunit"/>
    <property type="evidence" value="ECO:0007669"/>
    <property type="project" value="InterPro"/>
</dbReference>
<dbReference type="GO" id="GO:0070180">
    <property type="term" value="F:large ribosomal subunit rRNA binding"/>
    <property type="evidence" value="ECO:0007669"/>
    <property type="project" value="UniProtKB-UniRule"/>
</dbReference>
<dbReference type="GO" id="GO:0003735">
    <property type="term" value="F:structural constituent of ribosome"/>
    <property type="evidence" value="ECO:0007669"/>
    <property type="project" value="InterPro"/>
</dbReference>
<dbReference type="GO" id="GO:0006412">
    <property type="term" value="P:translation"/>
    <property type="evidence" value="ECO:0007669"/>
    <property type="project" value="UniProtKB-UniRule"/>
</dbReference>
<dbReference type="CDD" id="cd05797">
    <property type="entry name" value="Ribosomal_L10"/>
    <property type="match status" value="1"/>
</dbReference>
<dbReference type="FunFam" id="3.30.70.1730:FF:000001">
    <property type="entry name" value="50S ribosomal protein L10"/>
    <property type="match status" value="1"/>
</dbReference>
<dbReference type="Gene3D" id="3.30.70.1730">
    <property type="match status" value="1"/>
</dbReference>
<dbReference type="Gene3D" id="6.10.250.2350">
    <property type="match status" value="1"/>
</dbReference>
<dbReference type="HAMAP" id="MF_00362">
    <property type="entry name" value="Ribosomal_uL10"/>
    <property type="match status" value="1"/>
</dbReference>
<dbReference type="InterPro" id="IPR001790">
    <property type="entry name" value="Ribosomal_uL10"/>
</dbReference>
<dbReference type="InterPro" id="IPR043141">
    <property type="entry name" value="Ribosomal_uL10-like_sf"/>
</dbReference>
<dbReference type="InterPro" id="IPR022973">
    <property type="entry name" value="Ribosomal_uL10_bac"/>
</dbReference>
<dbReference type="InterPro" id="IPR047865">
    <property type="entry name" value="Ribosomal_uL10_bac_type"/>
</dbReference>
<dbReference type="InterPro" id="IPR002363">
    <property type="entry name" value="Ribosomal_uL10_CS_bac"/>
</dbReference>
<dbReference type="NCBIfam" id="NF000955">
    <property type="entry name" value="PRK00099.1-1"/>
    <property type="match status" value="1"/>
</dbReference>
<dbReference type="PANTHER" id="PTHR11560">
    <property type="entry name" value="39S RIBOSOMAL PROTEIN L10, MITOCHONDRIAL"/>
    <property type="match status" value="1"/>
</dbReference>
<dbReference type="Pfam" id="PF00466">
    <property type="entry name" value="Ribosomal_L10"/>
    <property type="match status" value="1"/>
</dbReference>
<dbReference type="SUPFAM" id="SSF160369">
    <property type="entry name" value="Ribosomal protein L10-like"/>
    <property type="match status" value="1"/>
</dbReference>
<dbReference type="PROSITE" id="PS01109">
    <property type="entry name" value="RIBOSOMAL_L10"/>
    <property type="match status" value="1"/>
</dbReference>
<comment type="function">
    <text evidence="1">Forms part of the ribosomal stalk, playing a central role in the interaction of the ribosome with GTP-bound translation factors.</text>
</comment>
<comment type="subunit">
    <text evidence="1">Part of the ribosomal stalk of the 50S ribosomal subunit. The N-terminus interacts with L11 and the large rRNA to form the base of the stalk. The C-terminus forms an elongated spine to which L12 dimers bind in a sequential fashion forming a multimeric L10(L12)X complex.</text>
</comment>
<comment type="similarity">
    <text evidence="1">Belongs to the universal ribosomal protein uL10 family.</text>
</comment>
<protein>
    <recommendedName>
        <fullName evidence="1">Large ribosomal subunit protein uL10</fullName>
    </recommendedName>
    <alternativeName>
        <fullName evidence="2">50S ribosomal protein L10</fullName>
    </alternativeName>
</protein>
<feature type="chain" id="PRO_1000121007" description="Large ribosomal subunit protein uL10">
    <location>
        <begin position="1"/>
        <end position="165"/>
    </location>
</feature>